<proteinExistence type="inferred from homology"/>
<name>DER_SHELP</name>
<accession>A3QCG6</accession>
<gene>
    <name evidence="1" type="primary">der</name>
    <name type="synonym">engA</name>
    <name type="ordered locus">Shew_1294</name>
</gene>
<protein>
    <recommendedName>
        <fullName evidence="1">GTPase Der</fullName>
    </recommendedName>
    <alternativeName>
        <fullName evidence="1">GTP-binding protein EngA</fullName>
    </alternativeName>
</protein>
<organism>
    <name type="scientific">Shewanella loihica (strain ATCC BAA-1088 / PV-4)</name>
    <dbReference type="NCBI Taxonomy" id="323850"/>
    <lineage>
        <taxon>Bacteria</taxon>
        <taxon>Pseudomonadati</taxon>
        <taxon>Pseudomonadota</taxon>
        <taxon>Gammaproteobacteria</taxon>
        <taxon>Alteromonadales</taxon>
        <taxon>Shewanellaceae</taxon>
        <taxon>Shewanella</taxon>
    </lineage>
</organism>
<keyword id="KW-0342">GTP-binding</keyword>
<keyword id="KW-0547">Nucleotide-binding</keyword>
<keyword id="KW-1185">Reference proteome</keyword>
<keyword id="KW-0677">Repeat</keyword>
<keyword id="KW-0690">Ribosome biogenesis</keyword>
<evidence type="ECO:0000255" key="1">
    <source>
        <dbReference type="HAMAP-Rule" id="MF_00195"/>
    </source>
</evidence>
<feature type="chain" id="PRO_1000011736" description="GTPase Der">
    <location>
        <begin position="1"/>
        <end position="489"/>
    </location>
</feature>
<feature type="domain" description="EngA-type G 1">
    <location>
        <begin position="3"/>
        <end position="166"/>
    </location>
</feature>
<feature type="domain" description="EngA-type G 2">
    <location>
        <begin position="200"/>
        <end position="373"/>
    </location>
</feature>
<feature type="domain" description="KH-like" evidence="1">
    <location>
        <begin position="374"/>
        <end position="458"/>
    </location>
</feature>
<feature type="binding site" evidence="1">
    <location>
        <begin position="9"/>
        <end position="16"/>
    </location>
    <ligand>
        <name>GTP</name>
        <dbReference type="ChEBI" id="CHEBI:37565"/>
        <label>1</label>
    </ligand>
</feature>
<feature type="binding site" evidence="1">
    <location>
        <begin position="56"/>
        <end position="60"/>
    </location>
    <ligand>
        <name>GTP</name>
        <dbReference type="ChEBI" id="CHEBI:37565"/>
        <label>1</label>
    </ligand>
</feature>
<feature type="binding site" evidence="1">
    <location>
        <begin position="118"/>
        <end position="121"/>
    </location>
    <ligand>
        <name>GTP</name>
        <dbReference type="ChEBI" id="CHEBI:37565"/>
        <label>1</label>
    </ligand>
</feature>
<feature type="binding site" evidence="1">
    <location>
        <begin position="206"/>
        <end position="213"/>
    </location>
    <ligand>
        <name>GTP</name>
        <dbReference type="ChEBI" id="CHEBI:37565"/>
        <label>2</label>
    </ligand>
</feature>
<feature type="binding site" evidence="1">
    <location>
        <begin position="253"/>
        <end position="257"/>
    </location>
    <ligand>
        <name>GTP</name>
        <dbReference type="ChEBI" id="CHEBI:37565"/>
        <label>2</label>
    </ligand>
</feature>
<feature type="binding site" evidence="1">
    <location>
        <begin position="318"/>
        <end position="321"/>
    </location>
    <ligand>
        <name>GTP</name>
        <dbReference type="ChEBI" id="CHEBI:37565"/>
        <label>2</label>
    </ligand>
</feature>
<comment type="function">
    <text evidence="1">GTPase that plays an essential role in the late steps of ribosome biogenesis.</text>
</comment>
<comment type="subunit">
    <text evidence="1">Associates with the 50S ribosomal subunit.</text>
</comment>
<comment type="similarity">
    <text evidence="1">Belongs to the TRAFAC class TrmE-Era-EngA-EngB-Septin-like GTPase superfamily. EngA (Der) GTPase family.</text>
</comment>
<dbReference type="EMBL" id="CP000606">
    <property type="protein sequence ID" value="ABO23164.1"/>
    <property type="molecule type" value="Genomic_DNA"/>
</dbReference>
<dbReference type="RefSeq" id="WP_011865096.1">
    <property type="nucleotide sequence ID" value="NC_009092.1"/>
</dbReference>
<dbReference type="SMR" id="A3QCG6"/>
<dbReference type="STRING" id="323850.Shew_1294"/>
<dbReference type="KEGG" id="slo:Shew_1294"/>
<dbReference type="eggNOG" id="COG1160">
    <property type="taxonomic scope" value="Bacteria"/>
</dbReference>
<dbReference type="HOGENOM" id="CLU_016077_6_2_6"/>
<dbReference type="OrthoDB" id="9805918at2"/>
<dbReference type="Proteomes" id="UP000001558">
    <property type="component" value="Chromosome"/>
</dbReference>
<dbReference type="GO" id="GO:0005525">
    <property type="term" value="F:GTP binding"/>
    <property type="evidence" value="ECO:0007669"/>
    <property type="project" value="UniProtKB-UniRule"/>
</dbReference>
<dbReference type="GO" id="GO:0043022">
    <property type="term" value="F:ribosome binding"/>
    <property type="evidence" value="ECO:0007669"/>
    <property type="project" value="TreeGrafter"/>
</dbReference>
<dbReference type="GO" id="GO:0042254">
    <property type="term" value="P:ribosome biogenesis"/>
    <property type="evidence" value="ECO:0007669"/>
    <property type="project" value="UniProtKB-KW"/>
</dbReference>
<dbReference type="CDD" id="cd01894">
    <property type="entry name" value="EngA1"/>
    <property type="match status" value="1"/>
</dbReference>
<dbReference type="CDD" id="cd01895">
    <property type="entry name" value="EngA2"/>
    <property type="match status" value="1"/>
</dbReference>
<dbReference type="FunFam" id="3.30.300.20:FF:000004">
    <property type="entry name" value="GTPase Der"/>
    <property type="match status" value="1"/>
</dbReference>
<dbReference type="FunFam" id="3.40.50.300:FF:000040">
    <property type="entry name" value="GTPase Der"/>
    <property type="match status" value="1"/>
</dbReference>
<dbReference type="FunFam" id="3.40.50.300:FF:000057">
    <property type="entry name" value="GTPase Der"/>
    <property type="match status" value="1"/>
</dbReference>
<dbReference type="Gene3D" id="3.30.300.20">
    <property type="match status" value="1"/>
</dbReference>
<dbReference type="Gene3D" id="3.40.50.300">
    <property type="entry name" value="P-loop containing nucleotide triphosphate hydrolases"/>
    <property type="match status" value="2"/>
</dbReference>
<dbReference type="HAMAP" id="MF_00195">
    <property type="entry name" value="GTPase_Der"/>
    <property type="match status" value="1"/>
</dbReference>
<dbReference type="InterPro" id="IPR031166">
    <property type="entry name" value="G_ENGA"/>
</dbReference>
<dbReference type="InterPro" id="IPR006073">
    <property type="entry name" value="GTP-bd"/>
</dbReference>
<dbReference type="InterPro" id="IPR016484">
    <property type="entry name" value="GTPase_Der"/>
</dbReference>
<dbReference type="InterPro" id="IPR032859">
    <property type="entry name" value="KH_dom-like"/>
</dbReference>
<dbReference type="InterPro" id="IPR015946">
    <property type="entry name" value="KH_dom-like_a/b"/>
</dbReference>
<dbReference type="InterPro" id="IPR027417">
    <property type="entry name" value="P-loop_NTPase"/>
</dbReference>
<dbReference type="InterPro" id="IPR005225">
    <property type="entry name" value="Small_GTP-bd"/>
</dbReference>
<dbReference type="NCBIfam" id="TIGR03594">
    <property type="entry name" value="GTPase_EngA"/>
    <property type="match status" value="1"/>
</dbReference>
<dbReference type="NCBIfam" id="TIGR00231">
    <property type="entry name" value="small_GTP"/>
    <property type="match status" value="2"/>
</dbReference>
<dbReference type="PANTHER" id="PTHR43834">
    <property type="entry name" value="GTPASE DER"/>
    <property type="match status" value="1"/>
</dbReference>
<dbReference type="PANTHER" id="PTHR43834:SF6">
    <property type="entry name" value="GTPASE DER"/>
    <property type="match status" value="1"/>
</dbReference>
<dbReference type="Pfam" id="PF14714">
    <property type="entry name" value="KH_dom-like"/>
    <property type="match status" value="1"/>
</dbReference>
<dbReference type="Pfam" id="PF01926">
    <property type="entry name" value="MMR_HSR1"/>
    <property type="match status" value="2"/>
</dbReference>
<dbReference type="PIRSF" id="PIRSF006485">
    <property type="entry name" value="GTP-binding_EngA"/>
    <property type="match status" value="1"/>
</dbReference>
<dbReference type="PRINTS" id="PR00326">
    <property type="entry name" value="GTP1OBG"/>
</dbReference>
<dbReference type="SUPFAM" id="SSF52540">
    <property type="entry name" value="P-loop containing nucleoside triphosphate hydrolases"/>
    <property type="match status" value="2"/>
</dbReference>
<dbReference type="PROSITE" id="PS51712">
    <property type="entry name" value="G_ENGA"/>
    <property type="match status" value="2"/>
</dbReference>
<reference key="1">
    <citation type="submission" date="2007-03" db="EMBL/GenBank/DDBJ databases">
        <title>Complete sequence of Shewanella loihica PV-4.</title>
        <authorList>
            <consortium name="US DOE Joint Genome Institute"/>
            <person name="Copeland A."/>
            <person name="Lucas S."/>
            <person name="Lapidus A."/>
            <person name="Barry K."/>
            <person name="Detter J.C."/>
            <person name="Glavina del Rio T."/>
            <person name="Hammon N."/>
            <person name="Israni S."/>
            <person name="Dalin E."/>
            <person name="Tice H."/>
            <person name="Pitluck S."/>
            <person name="Chain P."/>
            <person name="Malfatti S."/>
            <person name="Shin M."/>
            <person name="Vergez L."/>
            <person name="Schmutz J."/>
            <person name="Larimer F."/>
            <person name="Land M."/>
            <person name="Hauser L."/>
            <person name="Kyrpides N."/>
            <person name="Mikhailova N."/>
            <person name="Romine M.F."/>
            <person name="Serres G."/>
            <person name="Fredrickson J."/>
            <person name="Tiedje J."/>
            <person name="Richardson P."/>
        </authorList>
    </citation>
    <scope>NUCLEOTIDE SEQUENCE [LARGE SCALE GENOMIC DNA]</scope>
    <source>
        <strain>ATCC BAA-1088 / PV-4</strain>
    </source>
</reference>
<sequence>MIPVVALVGRPNVGKSTLFNRLTRTRDALVADYPGLTRDRKYGRAHLSGYEFIVVDTGGIDGTEEGIETRMAEQSLAAIEEADVVLFLTDARAGLTAADEAIAEHLRRREKTTFVVANKVDGIDADSACGEFWALGLGEVYQMAAAQGRGVTNMIEYALTPYAEAMGLTRDGEGEEEADERQYTEEEAEAEQQRLQDLPIKLAIIGKPNVGKSTLTNRILGEERVVVYDEPGTTRDSIYIPLERDGQEYVIIDTAGVRRRSKVHETVEKFSVIKTLKAVEDANVVLLVVDAREGIAEQDLGLLGFALNVGRALVIAVNKWDGIDQDVKERVKSELDRRLGFIDFARIHFISALHGTGVGHLFESVEEAYESATRRVSTSMLTRIMQMAQDDHQPPLVNGRRVKLKYAHAGGYNPPIVVIHGNQVKKLPDSYKRFMMNYYRRSLKVMGTPIQVRFQEGGNPFEGLNTKKLTVSQERRRKRMMSHIKDKKK</sequence>